<dbReference type="EC" id="1.-.-.-"/>
<dbReference type="EMBL" id="CU329671">
    <property type="protein sequence ID" value="CAA21922.3"/>
    <property type="molecule type" value="Genomic_DNA"/>
</dbReference>
<dbReference type="PIR" id="T39682">
    <property type="entry name" value="T39682"/>
</dbReference>
<dbReference type="RefSeq" id="NP_595132.2">
    <property type="nucleotide sequence ID" value="NM_001021039.3"/>
</dbReference>
<dbReference type="SMR" id="O94574"/>
<dbReference type="BioGRID" id="276695">
    <property type="interactions" value="23"/>
</dbReference>
<dbReference type="FunCoup" id="O94574">
    <property type="interactions" value="437"/>
</dbReference>
<dbReference type="STRING" id="284812.O94574"/>
<dbReference type="PaxDb" id="4896-SPBC1773.17c.1"/>
<dbReference type="EnsemblFungi" id="SPBC1773.17c.1">
    <property type="protein sequence ID" value="SPBC1773.17c.1:pep"/>
    <property type="gene ID" value="SPBC1773.17c"/>
</dbReference>
<dbReference type="GeneID" id="2540160"/>
<dbReference type="KEGG" id="spo:2540160"/>
<dbReference type="PomBase" id="SPBC1773.17c"/>
<dbReference type="VEuPathDB" id="FungiDB:SPBC1773.17c"/>
<dbReference type="eggNOG" id="KOG0069">
    <property type="taxonomic scope" value="Eukaryota"/>
</dbReference>
<dbReference type="HOGENOM" id="CLU_019796_1_2_1"/>
<dbReference type="InParanoid" id="O94574"/>
<dbReference type="OMA" id="GHEVEKR"/>
<dbReference type="PhylomeDB" id="O94574"/>
<dbReference type="PRO" id="PR:O94574"/>
<dbReference type="Proteomes" id="UP000002485">
    <property type="component" value="Chromosome II"/>
</dbReference>
<dbReference type="GO" id="GO:0005829">
    <property type="term" value="C:cytosol"/>
    <property type="evidence" value="ECO:0000318"/>
    <property type="project" value="GO_Central"/>
</dbReference>
<dbReference type="GO" id="GO:0005739">
    <property type="term" value="C:mitochondrion"/>
    <property type="evidence" value="ECO:0000266"/>
    <property type="project" value="PomBase"/>
</dbReference>
<dbReference type="GO" id="GO:0005634">
    <property type="term" value="C:nucleus"/>
    <property type="evidence" value="ECO:0000266"/>
    <property type="project" value="PomBase"/>
</dbReference>
<dbReference type="GO" id="GO:0030267">
    <property type="term" value="F:glyoxylate reductase (NADPH) activity"/>
    <property type="evidence" value="ECO:0000318"/>
    <property type="project" value="GO_Central"/>
</dbReference>
<dbReference type="GO" id="GO:0016618">
    <property type="term" value="F:hydroxypyruvate reductase [NAD(P)H] activity"/>
    <property type="evidence" value="ECO:0000318"/>
    <property type="project" value="GO_Central"/>
</dbReference>
<dbReference type="GO" id="GO:0051287">
    <property type="term" value="F:NAD binding"/>
    <property type="evidence" value="ECO:0007669"/>
    <property type="project" value="InterPro"/>
</dbReference>
<dbReference type="GO" id="GO:0006091">
    <property type="term" value="P:generation of precursor metabolites and energy"/>
    <property type="evidence" value="ECO:0000305"/>
    <property type="project" value="PomBase"/>
</dbReference>
<dbReference type="GO" id="GO:0009436">
    <property type="term" value="P:glyoxylate catabolic process"/>
    <property type="evidence" value="ECO:0000266"/>
    <property type="project" value="PomBase"/>
</dbReference>
<dbReference type="CDD" id="cd12168">
    <property type="entry name" value="Mand_dh_like"/>
    <property type="match status" value="1"/>
</dbReference>
<dbReference type="FunFam" id="3.40.50.720:FF:000026">
    <property type="entry name" value="Glyoxylate/hydroxypyruvate reductase B"/>
    <property type="match status" value="1"/>
</dbReference>
<dbReference type="Gene3D" id="3.40.50.720">
    <property type="entry name" value="NAD(P)-binding Rossmann-like Domain"/>
    <property type="match status" value="2"/>
</dbReference>
<dbReference type="InterPro" id="IPR050223">
    <property type="entry name" value="D-isomer_2-hydroxyacid_DH"/>
</dbReference>
<dbReference type="InterPro" id="IPR006139">
    <property type="entry name" value="D-isomer_2_OHA_DH_cat_dom"/>
</dbReference>
<dbReference type="InterPro" id="IPR029753">
    <property type="entry name" value="D-isomer_DH_CS"/>
</dbReference>
<dbReference type="InterPro" id="IPR029752">
    <property type="entry name" value="D-isomer_DH_CS1"/>
</dbReference>
<dbReference type="InterPro" id="IPR006140">
    <property type="entry name" value="D-isomer_DH_NAD-bd"/>
</dbReference>
<dbReference type="InterPro" id="IPR036291">
    <property type="entry name" value="NAD(P)-bd_dom_sf"/>
</dbReference>
<dbReference type="PANTHER" id="PTHR10996:SF129">
    <property type="entry name" value="2-HYDROXYACID DEHYDROGENASE C1773.17C-RELATED"/>
    <property type="match status" value="1"/>
</dbReference>
<dbReference type="PANTHER" id="PTHR10996">
    <property type="entry name" value="2-HYDROXYACID DEHYDROGENASE-RELATED"/>
    <property type="match status" value="1"/>
</dbReference>
<dbReference type="Pfam" id="PF00389">
    <property type="entry name" value="2-Hacid_dh"/>
    <property type="match status" value="1"/>
</dbReference>
<dbReference type="Pfam" id="PF02826">
    <property type="entry name" value="2-Hacid_dh_C"/>
    <property type="match status" value="1"/>
</dbReference>
<dbReference type="SUPFAM" id="SSF52283">
    <property type="entry name" value="Formate/glycerate dehydrogenase catalytic domain-like"/>
    <property type="match status" value="1"/>
</dbReference>
<dbReference type="SUPFAM" id="SSF51735">
    <property type="entry name" value="NAD(P)-binding Rossmann-fold domains"/>
    <property type="match status" value="1"/>
</dbReference>
<dbReference type="PROSITE" id="PS00065">
    <property type="entry name" value="D_2_HYDROXYACID_DH_1"/>
    <property type="match status" value="1"/>
</dbReference>
<dbReference type="PROSITE" id="PS00670">
    <property type="entry name" value="D_2_HYDROXYACID_DH_2"/>
    <property type="match status" value="1"/>
</dbReference>
<dbReference type="PROSITE" id="PS00671">
    <property type="entry name" value="D_2_HYDROXYACID_DH_3"/>
    <property type="match status" value="1"/>
</dbReference>
<gene>
    <name type="ORF">SPBC1773.17c</name>
    <name type="ORF">SPBP26C9.01c</name>
</gene>
<name>YGDH_SCHPO</name>
<protein>
    <recommendedName>
        <fullName>Putative 2-hydroxyacid dehydrogenase C1773.17c</fullName>
        <ecNumber>1.-.-.-</ecNumber>
    </recommendedName>
</protein>
<feature type="chain" id="PRO_0000076039" description="Putative 2-hydroxyacid dehydrogenase C1773.17c">
    <location>
        <begin position="1"/>
        <end position="340"/>
    </location>
</feature>
<feature type="active site" evidence="1">
    <location>
        <position position="251"/>
    </location>
</feature>
<feature type="active site" evidence="1">
    <location>
        <position position="280"/>
    </location>
</feature>
<feature type="active site" description="Proton donor" evidence="1">
    <location>
        <position position="298"/>
    </location>
</feature>
<feature type="binding site" evidence="1">
    <location>
        <begin position="169"/>
        <end position="170"/>
    </location>
    <ligand>
        <name>NAD(+)</name>
        <dbReference type="ChEBI" id="CHEBI:57540"/>
    </ligand>
</feature>
<feature type="binding site" evidence="1">
    <location>
        <begin position="249"/>
        <end position="251"/>
    </location>
    <ligand>
        <name>NAD(+)</name>
        <dbReference type="ChEBI" id="CHEBI:57540"/>
    </ligand>
</feature>
<feature type="binding site" evidence="1">
    <location>
        <position position="275"/>
    </location>
    <ligand>
        <name>NAD(+)</name>
        <dbReference type="ChEBI" id="CHEBI:57540"/>
    </ligand>
</feature>
<feature type="binding site" evidence="1">
    <location>
        <begin position="298"/>
        <end position="301"/>
    </location>
    <ligand>
        <name>NAD(+)</name>
        <dbReference type="ChEBI" id="CHEBI:57540"/>
    </ligand>
</feature>
<keyword id="KW-0520">NAD</keyword>
<keyword id="KW-0560">Oxidoreductase</keyword>
<keyword id="KW-1185">Reference proteome</keyword>
<evidence type="ECO:0000250" key="1"/>
<evidence type="ECO:0000305" key="2"/>
<reference key="1">
    <citation type="journal article" date="2002" name="Nature">
        <title>The genome sequence of Schizosaccharomyces pombe.</title>
        <authorList>
            <person name="Wood V."/>
            <person name="Gwilliam R."/>
            <person name="Rajandream M.A."/>
            <person name="Lyne M.H."/>
            <person name="Lyne R."/>
            <person name="Stewart A."/>
            <person name="Sgouros J.G."/>
            <person name="Peat N."/>
            <person name="Hayles J."/>
            <person name="Baker S.G."/>
            <person name="Basham D."/>
            <person name="Bowman S."/>
            <person name="Brooks K."/>
            <person name="Brown D."/>
            <person name="Brown S."/>
            <person name="Chillingworth T."/>
            <person name="Churcher C.M."/>
            <person name="Collins M."/>
            <person name="Connor R."/>
            <person name="Cronin A."/>
            <person name="Davis P."/>
            <person name="Feltwell T."/>
            <person name="Fraser A."/>
            <person name="Gentles S."/>
            <person name="Goble A."/>
            <person name="Hamlin N."/>
            <person name="Harris D.E."/>
            <person name="Hidalgo J."/>
            <person name="Hodgson G."/>
            <person name="Holroyd S."/>
            <person name="Hornsby T."/>
            <person name="Howarth S."/>
            <person name="Huckle E.J."/>
            <person name="Hunt S."/>
            <person name="Jagels K."/>
            <person name="James K.D."/>
            <person name="Jones L."/>
            <person name="Jones M."/>
            <person name="Leather S."/>
            <person name="McDonald S."/>
            <person name="McLean J."/>
            <person name="Mooney P."/>
            <person name="Moule S."/>
            <person name="Mungall K.L."/>
            <person name="Murphy L.D."/>
            <person name="Niblett D."/>
            <person name="Odell C."/>
            <person name="Oliver K."/>
            <person name="O'Neil S."/>
            <person name="Pearson D."/>
            <person name="Quail M.A."/>
            <person name="Rabbinowitsch E."/>
            <person name="Rutherford K.M."/>
            <person name="Rutter S."/>
            <person name="Saunders D."/>
            <person name="Seeger K."/>
            <person name="Sharp S."/>
            <person name="Skelton J."/>
            <person name="Simmonds M.N."/>
            <person name="Squares R."/>
            <person name="Squares S."/>
            <person name="Stevens K."/>
            <person name="Taylor K."/>
            <person name="Taylor R.G."/>
            <person name="Tivey A."/>
            <person name="Walsh S.V."/>
            <person name="Warren T."/>
            <person name="Whitehead S."/>
            <person name="Woodward J.R."/>
            <person name="Volckaert G."/>
            <person name="Aert R."/>
            <person name="Robben J."/>
            <person name="Grymonprez B."/>
            <person name="Weltjens I."/>
            <person name="Vanstreels E."/>
            <person name="Rieger M."/>
            <person name="Schaefer M."/>
            <person name="Mueller-Auer S."/>
            <person name="Gabel C."/>
            <person name="Fuchs M."/>
            <person name="Duesterhoeft A."/>
            <person name="Fritzc C."/>
            <person name="Holzer E."/>
            <person name="Moestl D."/>
            <person name="Hilbert H."/>
            <person name="Borzym K."/>
            <person name="Langer I."/>
            <person name="Beck A."/>
            <person name="Lehrach H."/>
            <person name="Reinhardt R."/>
            <person name="Pohl T.M."/>
            <person name="Eger P."/>
            <person name="Zimmermann W."/>
            <person name="Wedler H."/>
            <person name="Wambutt R."/>
            <person name="Purnelle B."/>
            <person name="Goffeau A."/>
            <person name="Cadieu E."/>
            <person name="Dreano S."/>
            <person name="Gloux S."/>
            <person name="Lelaure V."/>
            <person name="Mottier S."/>
            <person name="Galibert F."/>
            <person name="Aves S.J."/>
            <person name="Xiang Z."/>
            <person name="Hunt C."/>
            <person name="Moore K."/>
            <person name="Hurst S.M."/>
            <person name="Lucas M."/>
            <person name="Rochet M."/>
            <person name="Gaillardin C."/>
            <person name="Tallada V.A."/>
            <person name="Garzon A."/>
            <person name="Thode G."/>
            <person name="Daga R.R."/>
            <person name="Cruzado L."/>
            <person name="Jimenez J."/>
            <person name="Sanchez M."/>
            <person name="del Rey F."/>
            <person name="Benito J."/>
            <person name="Dominguez A."/>
            <person name="Revuelta J.L."/>
            <person name="Moreno S."/>
            <person name="Armstrong J."/>
            <person name="Forsburg S.L."/>
            <person name="Cerutti L."/>
            <person name="Lowe T."/>
            <person name="McCombie W.R."/>
            <person name="Paulsen I."/>
            <person name="Potashkin J."/>
            <person name="Shpakovski G.V."/>
            <person name="Ussery D."/>
            <person name="Barrell B.G."/>
            <person name="Nurse P."/>
        </authorList>
    </citation>
    <scope>NUCLEOTIDE SEQUENCE [LARGE SCALE GENOMIC DNA]</scope>
    <source>
        <strain>972 / ATCC 24843</strain>
    </source>
</reference>
<organism>
    <name type="scientific">Schizosaccharomyces pombe (strain 972 / ATCC 24843)</name>
    <name type="common">Fission yeast</name>
    <dbReference type="NCBI Taxonomy" id="284812"/>
    <lineage>
        <taxon>Eukaryota</taxon>
        <taxon>Fungi</taxon>
        <taxon>Dikarya</taxon>
        <taxon>Ascomycota</taxon>
        <taxon>Taphrinomycotina</taxon>
        <taxon>Schizosaccharomycetes</taxon>
        <taxon>Schizosaccharomycetales</taxon>
        <taxon>Schizosaccharomycetaceae</taxon>
        <taxon>Schizosaccharomyces</taxon>
    </lineage>
</organism>
<sequence length="340" mass="37658">MKQSRTKRVLAIGELKFATNTLKRLSEKYHFEFIVPDPHDRSKTIEKIHEAASKSTFDACFWLFRNAAISPFTEEMLGPLLPTCKLFVTGAAGYNNVDVDWATRNGVYVANTPNGPTEGTANMNLMLFMCTLRGAREAEQSLRLGKWRQNLSLTDDPYGKRVGIIGMGAIGKSFAQKILPLGCEIVYHNRNRLEAEEEKRLGASFVSFDELLSSSDVISINCPLTPATHDLISTKEFEKMKDGVYIINTARGAIINEDAFIKAIKSGKVARAGLDVFLNEPTPNKFWLECDKVTIQPHCGVYTNFTVAKTEECVLASIETFLDTGIPTNPVNGPFGMNGC</sequence>
<accession>O94574</accession>
<accession>Q9HFE2</accession>
<proteinExistence type="inferred from homology"/>
<comment type="similarity">
    <text evidence="2">Belongs to the D-isomer specific 2-hydroxyacid dehydrogenase family.</text>
</comment>